<proteinExistence type="inferred from homology"/>
<dbReference type="EC" id="3.4.11.5"/>
<dbReference type="EMBL" id="AB017194">
    <property type="protein sequence ID" value="BAA32603.1"/>
    <property type="molecule type" value="Genomic_DNA"/>
</dbReference>
<dbReference type="SMR" id="O83041"/>
<dbReference type="ESTHER" id="plebo-pip">
    <property type="family name" value="Proline_iminopeptidase"/>
</dbReference>
<dbReference type="MEROPS" id="S33.001"/>
<dbReference type="GO" id="GO:0005737">
    <property type="term" value="C:cytoplasm"/>
    <property type="evidence" value="ECO:0007669"/>
    <property type="project" value="UniProtKB-SubCell"/>
</dbReference>
<dbReference type="GO" id="GO:0004177">
    <property type="term" value="F:aminopeptidase activity"/>
    <property type="evidence" value="ECO:0007669"/>
    <property type="project" value="UniProtKB-KW"/>
</dbReference>
<dbReference type="GO" id="GO:0006508">
    <property type="term" value="P:proteolysis"/>
    <property type="evidence" value="ECO:0007669"/>
    <property type="project" value="UniProtKB-KW"/>
</dbReference>
<dbReference type="Gene3D" id="3.40.50.1820">
    <property type="entry name" value="alpha/beta hydrolase"/>
    <property type="match status" value="1"/>
</dbReference>
<dbReference type="InterPro" id="IPR000073">
    <property type="entry name" value="AB_hydrolase_1"/>
</dbReference>
<dbReference type="InterPro" id="IPR029058">
    <property type="entry name" value="AB_hydrolase_fold"/>
</dbReference>
<dbReference type="InterPro" id="IPR002410">
    <property type="entry name" value="Peptidase_S33"/>
</dbReference>
<dbReference type="InterPro" id="IPR005944">
    <property type="entry name" value="Pro_iminopeptidase"/>
</dbReference>
<dbReference type="NCBIfam" id="TIGR01249">
    <property type="entry name" value="pro_imino_pep_1"/>
    <property type="match status" value="1"/>
</dbReference>
<dbReference type="PANTHER" id="PTHR43722">
    <property type="entry name" value="PROLINE IMINOPEPTIDASE"/>
    <property type="match status" value="1"/>
</dbReference>
<dbReference type="PANTHER" id="PTHR43722:SF1">
    <property type="entry name" value="PROLINE IMINOPEPTIDASE"/>
    <property type="match status" value="1"/>
</dbReference>
<dbReference type="Pfam" id="PF00561">
    <property type="entry name" value="Abhydrolase_1"/>
    <property type="match status" value="1"/>
</dbReference>
<dbReference type="PIRSF" id="PIRSF006431">
    <property type="entry name" value="Pept_S33"/>
    <property type="match status" value="1"/>
</dbReference>
<dbReference type="PRINTS" id="PR00793">
    <property type="entry name" value="PROAMNOPTASE"/>
</dbReference>
<dbReference type="SUPFAM" id="SSF53474">
    <property type="entry name" value="alpha/beta-Hydrolases"/>
    <property type="match status" value="1"/>
</dbReference>
<name>PIP_LEPBY</name>
<gene>
    <name type="primary">pip</name>
</gene>
<feature type="chain" id="PRO_0000080844" description="Probable proline iminopeptidase">
    <location>
        <begin position="1"/>
        <end position="321"/>
    </location>
</feature>
<feature type="domain" description="AB hydrolase-1" evidence="2">
    <location>
        <begin position="35"/>
        <end position="296"/>
    </location>
</feature>
<feature type="active site" description="Nucleophile" evidence="1">
    <location>
        <position position="110"/>
    </location>
</feature>
<feature type="active site" evidence="1">
    <location>
        <position position="266"/>
    </location>
</feature>
<feature type="active site" description="Proton donor" evidence="1">
    <location>
        <position position="294"/>
    </location>
</feature>
<comment type="function">
    <text evidence="1">Specifically catalyzes the removal of N-terminal proline residues from peptides.</text>
</comment>
<comment type="catalytic activity">
    <reaction>
        <text>Release of N-terminal proline from a peptide.</text>
        <dbReference type="EC" id="3.4.11.5"/>
    </reaction>
</comment>
<comment type="subcellular location">
    <subcellularLocation>
        <location evidence="1">Cytoplasm</location>
    </subcellularLocation>
</comment>
<comment type="similarity">
    <text evidence="3">Belongs to the peptidase S33 family.</text>
</comment>
<accession>O83041</accession>
<keyword id="KW-0031">Aminopeptidase</keyword>
<keyword id="KW-0963">Cytoplasm</keyword>
<keyword id="KW-0378">Hydrolase</keyword>
<keyword id="KW-0645">Protease</keyword>
<protein>
    <recommendedName>
        <fullName>Probable proline iminopeptidase</fullName>
        <shortName>PIP</shortName>
        <ecNumber>3.4.11.5</ecNumber>
    </recommendedName>
    <alternativeName>
        <fullName>Prolyl aminopeptidase</fullName>
        <shortName>PAP</shortName>
    </alternativeName>
</protein>
<organism>
    <name type="scientific">Leptolyngbya boryana</name>
    <name type="common">Plectonema boryanum</name>
    <dbReference type="NCBI Taxonomy" id="1184"/>
    <lineage>
        <taxon>Bacteria</taxon>
        <taxon>Bacillati</taxon>
        <taxon>Cyanobacteriota</taxon>
        <taxon>Cyanophyceae</taxon>
        <taxon>Leptolyngbyales</taxon>
        <taxon>Leptolyngbyaceae</taxon>
        <taxon>Leptolyngbya group</taxon>
        <taxon>Leptolyngbya</taxon>
    </lineage>
</organism>
<evidence type="ECO:0000250" key="1"/>
<evidence type="ECO:0000255" key="2"/>
<evidence type="ECO:0000305" key="3"/>
<reference key="1">
    <citation type="submission" date="1998-08" db="EMBL/GenBank/DDBJ databases">
        <title>Cyanobacterial ferredoxin gene.</title>
        <authorList>
            <person name="Matsumura T."/>
            <person name="Fujita Y."/>
            <person name="Hase T."/>
        </authorList>
    </citation>
    <scope>NUCLEOTIDE SEQUENCE [GENOMIC DNA]</scope>
    <source>
        <strain>DG5</strain>
    </source>
</reference>
<sequence>MRQLYPAIAPYQSGMLPVSALHTIYYEQSGNPNGKPVVFLHGGPGGGTIPTYRQYFDPSKWRIILFDQRGAGKSTPHAELRENTTWDLVSDIEKLRSHLNIDRWFVFGGSWGSTLSLAYSQTHPDRCLGLILRGIFLLRRKEILWFYQDGASWIFPDAWEHYLEPIPPEERDDMISAYYRRLTSKDAEIRSTAAKAWSVWEGTTSRLIVDPSLQSKFADDEFADAFARIECHYFINRGFFETDDQLLQNCDRIAHIPTVIVQGRYDVVCPMTSAWALHKALPESELIVVPDAGHSMMEAGILSALIDATDRFVAQKTNGKI</sequence>